<proteinExistence type="inferred from homology"/>
<feature type="chain" id="PRO_0000229434" description="GMP synthase [glutamine-hydrolyzing]">
    <location>
        <begin position="1"/>
        <end position="525"/>
    </location>
</feature>
<feature type="domain" description="Glutamine amidotransferase type-1" evidence="1">
    <location>
        <begin position="9"/>
        <end position="207"/>
    </location>
</feature>
<feature type="domain" description="GMPS ATP-PPase" evidence="1">
    <location>
        <begin position="208"/>
        <end position="400"/>
    </location>
</feature>
<feature type="active site" description="Nucleophile" evidence="1">
    <location>
        <position position="86"/>
    </location>
</feature>
<feature type="active site" evidence="1">
    <location>
        <position position="181"/>
    </location>
</feature>
<feature type="active site" evidence="1">
    <location>
        <position position="183"/>
    </location>
</feature>
<feature type="binding site" evidence="1">
    <location>
        <begin position="235"/>
        <end position="241"/>
    </location>
    <ligand>
        <name>ATP</name>
        <dbReference type="ChEBI" id="CHEBI:30616"/>
    </ligand>
</feature>
<protein>
    <recommendedName>
        <fullName evidence="1">GMP synthase [glutamine-hydrolyzing]</fullName>
        <ecNumber evidence="1">6.3.5.2</ecNumber>
    </recommendedName>
    <alternativeName>
        <fullName evidence="1">GMP synthetase</fullName>
    </alternativeName>
    <alternativeName>
        <fullName evidence="1">Glutamine amidotransferase</fullName>
    </alternativeName>
</protein>
<keyword id="KW-0067">ATP-binding</keyword>
<keyword id="KW-0315">Glutamine amidotransferase</keyword>
<keyword id="KW-0332">GMP biosynthesis</keyword>
<keyword id="KW-0436">Ligase</keyword>
<keyword id="KW-0547">Nucleotide-binding</keyword>
<keyword id="KW-0658">Purine biosynthesis</keyword>
<keyword id="KW-1185">Reference proteome</keyword>
<reference key="1">
    <citation type="journal article" date="2004" name="Proc. Natl. Acad. Sci. U.S.A.">
        <title>Genome sequence of the deep-sea gamma-proteobacterium Idiomarina loihiensis reveals amino acid fermentation as a source of carbon and energy.</title>
        <authorList>
            <person name="Hou S."/>
            <person name="Saw J.H."/>
            <person name="Lee K.S."/>
            <person name="Freitas T.A."/>
            <person name="Belisle C."/>
            <person name="Kawarabayasi Y."/>
            <person name="Donachie S.P."/>
            <person name="Pikina A."/>
            <person name="Galperin M.Y."/>
            <person name="Koonin E.V."/>
            <person name="Makarova K.S."/>
            <person name="Omelchenko M.V."/>
            <person name="Sorokin A."/>
            <person name="Wolf Y.I."/>
            <person name="Li Q.X."/>
            <person name="Keum Y.S."/>
            <person name="Campbell S."/>
            <person name="Denery J."/>
            <person name="Aizawa S."/>
            <person name="Shibata S."/>
            <person name="Malahoff A."/>
            <person name="Alam M."/>
        </authorList>
    </citation>
    <scope>NUCLEOTIDE SEQUENCE [LARGE SCALE GENOMIC DNA]</scope>
    <source>
        <strain>ATCC BAA-735 / DSM 15497 / L2-TR</strain>
    </source>
</reference>
<dbReference type="EC" id="6.3.5.2" evidence="1"/>
<dbReference type="EMBL" id="AE017340">
    <property type="protein sequence ID" value="AAV81420.1"/>
    <property type="molecule type" value="Genomic_DNA"/>
</dbReference>
<dbReference type="RefSeq" id="WP_011233836.1">
    <property type="nucleotide sequence ID" value="NC_006512.1"/>
</dbReference>
<dbReference type="SMR" id="Q5QWW5"/>
<dbReference type="STRING" id="283942.IL0579"/>
<dbReference type="MEROPS" id="C26.A07"/>
<dbReference type="GeneID" id="41335730"/>
<dbReference type="KEGG" id="ilo:IL0579"/>
<dbReference type="eggNOG" id="COG0518">
    <property type="taxonomic scope" value="Bacteria"/>
</dbReference>
<dbReference type="eggNOG" id="COG0519">
    <property type="taxonomic scope" value="Bacteria"/>
</dbReference>
<dbReference type="HOGENOM" id="CLU_014340_0_5_6"/>
<dbReference type="OrthoDB" id="9802219at2"/>
<dbReference type="UniPathway" id="UPA00189">
    <property type="reaction ID" value="UER00296"/>
</dbReference>
<dbReference type="Proteomes" id="UP000001171">
    <property type="component" value="Chromosome"/>
</dbReference>
<dbReference type="GO" id="GO:0005829">
    <property type="term" value="C:cytosol"/>
    <property type="evidence" value="ECO:0007669"/>
    <property type="project" value="TreeGrafter"/>
</dbReference>
<dbReference type="GO" id="GO:0005524">
    <property type="term" value="F:ATP binding"/>
    <property type="evidence" value="ECO:0007669"/>
    <property type="project" value="UniProtKB-UniRule"/>
</dbReference>
<dbReference type="GO" id="GO:0003921">
    <property type="term" value="F:GMP synthase activity"/>
    <property type="evidence" value="ECO:0007669"/>
    <property type="project" value="InterPro"/>
</dbReference>
<dbReference type="CDD" id="cd01742">
    <property type="entry name" value="GATase1_GMP_Synthase"/>
    <property type="match status" value="1"/>
</dbReference>
<dbReference type="CDD" id="cd01997">
    <property type="entry name" value="GMP_synthase_C"/>
    <property type="match status" value="1"/>
</dbReference>
<dbReference type="FunFam" id="3.30.300.10:FF:000002">
    <property type="entry name" value="GMP synthase [glutamine-hydrolyzing]"/>
    <property type="match status" value="1"/>
</dbReference>
<dbReference type="FunFam" id="3.40.50.620:FF:000001">
    <property type="entry name" value="GMP synthase [glutamine-hydrolyzing]"/>
    <property type="match status" value="1"/>
</dbReference>
<dbReference type="FunFam" id="3.40.50.880:FF:000001">
    <property type="entry name" value="GMP synthase [glutamine-hydrolyzing]"/>
    <property type="match status" value="1"/>
</dbReference>
<dbReference type="Gene3D" id="3.30.300.10">
    <property type="match status" value="1"/>
</dbReference>
<dbReference type="Gene3D" id="3.40.50.880">
    <property type="match status" value="1"/>
</dbReference>
<dbReference type="Gene3D" id="3.40.50.620">
    <property type="entry name" value="HUPs"/>
    <property type="match status" value="1"/>
</dbReference>
<dbReference type="HAMAP" id="MF_00344">
    <property type="entry name" value="GMP_synthase"/>
    <property type="match status" value="1"/>
</dbReference>
<dbReference type="InterPro" id="IPR029062">
    <property type="entry name" value="Class_I_gatase-like"/>
</dbReference>
<dbReference type="InterPro" id="IPR017926">
    <property type="entry name" value="GATASE"/>
</dbReference>
<dbReference type="InterPro" id="IPR001674">
    <property type="entry name" value="GMP_synth_C"/>
</dbReference>
<dbReference type="InterPro" id="IPR004739">
    <property type="entry name" value="GMP_synth_GATase"/>
</dbReference>
<dbReference type="InterPro" id="IPR022955">
    <property type="entry name" value="GMP_synthase"/>
</dbReference>
<dbReference type="InterPro" id="IPR025777">
    <property type="entry name" value="GMPS_ATP_PPase_dom"/>
</dbReference>
<dbReference type="InterPro" id="IPR022310">
    <property type="entry name" value="NAD/GMP_synthase"/>
</dbReference>
<dbReference type="InterPro" id="IPR014729">
    <property type="entry name" value="Rossmann-like_a/b/a_fold"/>
</dbReference>
<dbReference type="NCBIfam" id="TIGR00884">
    <property type="entry name" value="guaA_Cterm"/>
    <property type="match status" value="1"/>
</dbReference>
<dbReference type="NCBIfam" id="TIGR00888">
    <property type="entry name" value="guaA_Nterm"/>
    <property type="match status" value="1"/>
</dbReference>
<dbReference type="NCBIfam" id="NF000848">
    <property type="entry name" value="PRK00074.1"/>
    <property type="match status" value="1"/>
</dbReference>
<dbReference type="PANTHER" id="PTHR11922:SF2">
    <property type="entry name" value="GMP SYNTHASE [GLUTAMINE-HYDROLYZING]"/>
    <property type="match status" value="1"/>
</dbReference>
<dbReference type="PANTHER" id="PTHR11922">
    <property type="entry name" value="GMP SYNTHASE-RELATED"/>
    <property type="match status" value="1"/>
</dbReference>
<dbReference type="Pfam" id="PF00117">
    <property type="entry name" value="GATase"/>
    <property type="match status" value="1"/>
</dbReference>
<dbReference type="Pfam" id="PF00958">
    <property type="entry name" value="GMP_synt_C"/>
    <property type="match status" value="1"/>
</dbReference>
<dbReference type="Pfam" id="PF02540">
    <property type="entry name" value="NAD_synthase"/>
    <property type="match status" value="1"/>
</dbReference>
<dbReference type="PRINTS" id="PR00097">
    <property type="entry name" value="ANTSNTHASEII"/>
</dbReference>
<dbReference type="PRINTS" id="PR00099">
    <property type="entry name" value="CPSGATASE"/>
</dbReference>
<dbReference type="PRINTS" id="PR00096">
    <property type="entry name" value="GATASE"/>
</dbReference>
<dbReference type="SUPFAM" id="SSF52402">
    <property type="entry name" value="Adenine nucleotide alpha hydrolases-like"/>
    <property type="match status" value="1"/>
</dbReference>
<dbReference type="SUPFAM" id="SSF52317">
    <property type="entry name" value="Class I glutamine amidotransferase-like"/>
    <property type="match status" value="1"/>
</dbReference>
<dbReference type="SUPFAM" id="SSF54810">
    <property type="entry name" value="GMP synthetase C-terminal dimerisation domain"/>
    <property type="match status" value="1"/>
</dbReference>
<dbReference type="PROSITE" id="PS51273">
    <property type="entry name" value="GATASE_TYPE_1"/>
    <property type="match status" value="1"/>
</dbReference>
<dbReference type="PROSITE" id="PS51553">
    <property type="entry name" value="GMPS_ATP_PPASE"/>
    <property type="match status" value="1"/>
</dbReference>
<sequence length="525" mass="59069">MTRDIHDHRILILDFGSQYTQLIARRIREIGVYCELWAWDVDEADIREFAPKGIILSGGPESVAEEGSPRAPEYVFNAGVPVFGICYGMQTMAHQLGGSVQCSLEREFGYAQIELVEQSPLFKAIEDAVSESGAPLLDVWMSHGDKVEMIPEGFHTVAKTSYCPYAAMADEERQFYGVQFHPEVTHTRQGQRMLEHFVSDICGCEKQWTPAKIIDDAIERIREQVGSDKVILGLSGGVDSSVTAMLLHRAIGEQLTCVFVDNGLLRLNEAEQVMEMFGDHYGLNILPIRAEDRFLDALAGENDPEKKRKIIGNTFIEIFDEEAGKLTEVDWLAQGTIYPDVIESAGSKTGKAHVIKSHHNVGGLPEDMKLGLVEPLRELFKDEVRKIGLELGLPYNMLYRHPFPGPGLGVRVLGEIKKEYCDLLRRADAIFIEELHNADWYNKVSQAFAVFLPVRSVGVMGDQRKYDWVIAIRAVETIDFMTARWAHLPYELLEKVSNRIINEVNGISRVTYDISGKPPATIEWE</sequence>
<comment type="function">
    <text evidence="1">Catalyzes the synthesis of GMP from XMP.</text>
</comment>
<comment type="catalytic activity">
    <reaction evidence="1">
        <text>XMP + L-glutamine + ATP + H2O = GMP + L-glutamate + AMP + diphosphate + 2 H(+)</text>
        <dbReference type="Rhea" id="RHEA:11680"/>
        <dbReference type="ChEBI" id="CHEBI:15377"/>
        <dbReference type="ChEBI" id="CHEBI:15378"/>
        <dbReference type="ChEBI" id="CHEBI:29985"/>
        <dbReference type="ChEBI" id="CHEBI:30616"/>
        <dbReference type="ChEBI" id="CHEBI:33019"/>
        <dbReference type="ChEBI" id="CHEBI:57464"/>
        <dbReference type="ChEBI" id="CHEBI:58115"/>
        <dbReference type="ChEBI" id="CHEBI:58359"/>
        <dbReference type="ChEBI" id="CHEBI:456215"/>
        <dbReference type="EC" id="6.3.5.2"/>
    </reaction>
</comment>
<comment type="pathway">
    <text evidence="1">Purine metabolism; GMP biosynthesis; GMP from XMP (L-Gln route): step 1/1.</text>
</comment>
<comment type="subunit">
    <text evidence="1">Homodimer.</text>
</comment>
<accession>Q5QWW5</accession>
<evidence type="ECO:0000255" key="1">
    <source>
        <dbReference type="HAMAP-Rule" id="MF_00344"/>
    </source>
</evidence>
<gene>
    <name evidence="1" type="primary">guaA</name>
    <name type="ordered locus">IL0579</name>
</gene>
<name>GUAA_IDILO</name>
<organism>
    <name type="scientific">Idiomarina loihiensis (strain ATCC BAA-735 / DSM 15497 / L2-TR)</name>
    <dbReference type="NCBI Taxonomy" id="283942"/>
    <lineage>
        <taxon>Bacteria</taxon>
        <taxon>Pseudomonadati</taxon>
        <taxon>Pseudomonadota</taxon>
        <taxon>Gammaproteobacteria</taxon>
        <taxon>Alteromonadales</taxon>
        <taxon>Idiomarinaceae</taxon>
        <taxon>Idiomarina</taxon>
    </lineage>
</organism>